<evidence type="ECO:0000255" key="1">
    <source>
        <dbReference type="HAMAP-Rule" id="MF_00135"/>
    </source>
</evidence>
<sequence length="206" mass="21888">MSAVRSKICGITRIEDALAAAEAGADAIGLVFYPKSPRAVTVLQARAIIAALPPFITTVGLFVNASRCELNETLDAVALDMLQFHGDETPEECDGYHRPYIKALRVKAGDDIAQACRTYRNARGVLLDTYVEGVPGGTGETFDWALIPDDLDKPVILAGGLTSANVAQAIAQVRPYAVDVSGGVEKSKGIKDREKILAFMSAVHGT</sequence>
<protein>
    <recommendedName>
        <fullName evidence="1">N-(5'-phosphoribosyl)anthranilate isomerase</fullName>
        <shortName evidence="1">PRAI</shortName>
        <ecNumber evidence="1">5.3.1.24</ecNumber>
    </recommendedName>
</protein>
<keyword id="KW-0028">Amino-acid biosynthesis</keyword>
<keyword id="KW-0057">Aromatic amino acid biosynthesis</keyword>
<keyword id="KW-0413">Isomerase</keyword>
<keyword id="KW-1185">Reference proteome</keyword>
<keyword id="KW-0822">Tryptophan biosynthesis</keyword>
<gene>
    <name evidence="1" type="primary">trpF</name>
    <name type="ordered locus">PSPTO_3816</name>
</gene>
<comment type="catalytic activity">
    <reaction evidence="1">
        <text>N-(5-phospho-beta-D-ribosyl)anthranilate = 1-(2-carboxyphenylamino)-1-deoxy-D-ribulose 5-phosphate</text>
        <dbReference type="Rhea" id="RHEA:21540"/>
        <dbReference type="ChEBI" id="CHEBI:18277"/>
        <dbReference type="ChEBI" id="CHEBI:58613"/>
        <dbReference type="EC" id="5.3.1.24"/>
    </reaction>
</comment>
<comment type="pathway">
    <text evidence="1">Amino-acid biosynthesis; L-tryptophan biosynthesis; L-tryptophan from chorismate: step 3/5.</text>
</comment>
<comment type="similarity">
    <text evidence="1">Belongs to the TrpF family.</text>
</comment>
<feature type="chain" id="PRO_0000154371" description="N-(5'-phosphoribosyl)anthranilate isomerase">
    <location>
        <begin position="1"/>
        <end position="206"/>
    </location>
</feature>
<organism>
    <name type="scientific">Pseudomonas syringae pv. tomato (strain ATCC BAA-871 / DC3000)</name>
    <dbReference type="NCBI Taxonomy" id="223283"/>
    <lineage>
        <taxon>Bacteria</taxon>
        <taxon>Pseudomonadati</taxon>
        <taxon>Pseudomonadota</taxon>
        <taxon>Gammaproteobacteria</taxon>
        <taxon>Pseudomonadales</taxon>
        <taxon>Pseudomonadaceae</taxon>
        <taxon>Pseudomonas</taxon>
    </lineage>
</organism>
<proteinExistence type="inferred from homology"/>
<reference key="1">
    <citation type="journal article" date="2003" name="Proc. Natl. Acad. Sci. U.S.A.">
        <title>The complete genome sequence of the Arabidopsis and tomato pathogen Pseudomonas syringae pv. tomato DC3000.</title>
        <authorList>
            <person name="Buell C.R."/>
            <person name="Joardar V."/>
            <person name="Lindeberg M."/>
            <person name="Selengut J."/>
            <person name="Paulsen I.T."/>
            <person name="Gwinn M.L."/>
            <person name="Dodson R.J."/>
            <person name="DeBoy R.T."/>
            <person name="Durkin A.S."/>
            <person name="Kolonay J.F."/>
            <person name="Madupu R."/>
            <person name="Daugherty S.C."/>
            <person name="Brinkac L.M."/>
            <person name="Beanan M.J."/>
            <person name="Haft D.H."/>
            <person name="Nelson W.C."/>
            <person name="Davidsen T.M."/>
            <person name="Zafar N."/>
            <person name="Zhou L."/>
            <person name="Liu J."/>
            <person name="Yuan Q."/>
            <person name="Khouri H.M."/>
            <person name="Fedorova N.B."/>
            <person name="Tran B."/>
            <person name="Russell D."/>
            <person name="Berry K.J."/>
            <person name="Utterback T.R."/>
            <person name="Van Aken S.E."/>
            <person name="Feldblyum T.V."/>
            <person name="D'Ascenzo M."/>
            <person name="Deng W.-L."/>
            <person name="Ramos A.R."/>
            <person name="Alfano J.R."/>
            <person name="Cartinhour S."/>
            <person name="Chatterjee A.K."/>
            <person name="Delaney T.P."/>
            <person name="Lazarowitz S.G."/>
            <person name="Martin G.B."/>
            <person name="Schneider D.J."/>
            <person name="Tang X."/>
            <person name="Bender C.L."/>
            <person name="White O."/>
            <person name="Fraser C.M."/>
            <person name="Collmer A."/>
        </authorList>
    </citation>
    <scope>NUCLEOTIDE SEQUENCE [LARGE SCALE GENOMIC DNA]</scope>
    <source>
        <strain>ATCC BAA-871 / DC3000</strain>
    </source>
</reference>
<dbReference type="EC" id="5.3.1.24" evidence="1"/>
<dbReference type="EMBL" id="AE016853">
    <property type="protein sequence ID" value="AAO57285.1"/>
    <property type="molecule type" value="Genomic_DNA"/>
</dbReference>
<dbReference type="RefSeq" id="NP_793590.1">
    <property type="nucleotide sequence ID" value="NC_004578.1"/>
</dbReference>
<dbReference type="RefSeq" id="WP_005619689.1">
    <property type="nucleotide sequence ID" value="NC_004578.1"/>
</dbReference>
<dbReference type="SMR" id="Q87YI1"/>
<dbReference type="STRING" id="223283.PSPTO_3816"/>
<dbReference type="GeneID" id="1185487"/>
<dbReference type="KEGG" id="pst:PSPTO_3816"/>
<dbReference type="PATRIC" id="fig|223283.9.peg.3913"/>
<dbReference type="eggNOG" id="COG0135">
    <property type="taxonomic scope" value="Bacteria"/>
</dbReference>
<dbReference type="HOGENOM" id="CLU_076364_2_0_6"/>
<dbReference type="OrthoDB" id="9796196at2"/>
<dbReference type="PhylomeDB" id="Q87YI1"/>
<dbReference type="UniPathway" id="UPA00035">
    <property type="reaction ID" value="UER00042"/>
</dbReference>
<dbReference type="Proteomes" id="UP000002515">
    <property type="component" value="Chromosome"/>
</dbReference>
<dbReference type="GO" id="GO:0004640">
    <property type="term" value="F:phosphoribosylanthranilate isomerase activity"/>
    <property type="evidence" value="ECO:0007669"/>
    <property type="project" value="UniProtKB-UniRule"/>
</dbReference>
<dbReference type="GO" id="GO:0000162">
    <property type="term" value="P:L-tryptophan biosynthetic process"/>
    <property type="evidence" value="ECO:0007669"/>
    <property type="project" value="UniProtKB-UniRule"/>
</dbReference>
<dbReference type="CDD" id="cd00405">
    <property type="entry name" value="PRAI"/>
    <property type="match status" value="1"/>
</dbReference>
<dbReference type="FunFam" id="3.20.20.70:FF:000075">
    <property type="entry name" value="Tryptophan biosynthesis protein TRP1"/>
    <property type="match status" value="1"/>
</dbReference>
<dbReference type="Gene3D" id="3.20.20.70">
    <property type="entry name" value="Aldolase class I"/>
    <property type="match status" value="1"/>
</dbReference>
<dbReference type="HAMAP" id="MF_00135">
    <property type="entry name" value="PRAI"/>
    <property type="match status" value="1"/>
</dbReference>
<dbReference type="InterPro" id="IPR013785">
    <property type="entry name" value="Aldolase_TIM"/>
</dbReference>
<dbReference type="InterPro" id="IPR001240">
    <property type="entry name" value="PRAI_dom"/>
</dbReference>
<dbReference type="InterPro" id="IPR011060">
    <property type="entry name" value="RibuloseP-bd_barrel"/>
</dbReference>
<dbReference type="InterPro" id="IPR044643">
    <property type="entry name" value="TrpF_fam"/>
</dbReference>
<dbReference type="NCBIfam" id="NF002298">
    <property type="entry name" value="PRK01222.1-4"/>
    <property type="match status" value="1"/>
</dbReference>
<dbReference type="NCBIfam" id="NF002299">
    <property type="entry name" value="PRK01222.1-6"/>
    <property type="match status" value="1"/>
</dbReference>
<dbReference type="PANTHER" id="PTHR42894">
    <property type="entry name" value="N-(5'-PHOSPHORIBOSYL)ANTHRANILATE ISOMERASE"/>
    <property type="match status" value="1"/>
</dbReference>
<dbReference type="PANTHER" id="PTHR42894:SF1">
    <property type="entry name" value="N-(5'-PHOSPHORIBOSYL)ANTHRANILATE ISOMERASE"/>
    <property type="match status" value="1"/>
</dbReference>
<dbReference type="Pfam" id="PF00697">
    <property type="entry name" value="PRAI"/>
    <property type="match status" value="1"/>
</dbReference>
<dbReference type="SUPFAM" id="SSF51366">
    <property type="entry name" value="Ribulose-phoshate binding barrel"/>
    <property type="match status" value="1"/>
</dbReference>
<accession>Q87YI1</accession>
<name>TRPF_PSESM</name>